<organism>
    <name type="scientific">Nitrosomonas eutropha (strain DSM 101675 / C91 / Nm57)</name>
    <dbReference type="NCBI Taxonomy" id="335283"/>
    <lineage>
        <taxon>Bacteria</taxon>
        <taxon>Pseudomonadati</taxon>
        <taxon>Pseudomonadota</taxon>
        <taxon>Betaproteobacteria</taxon>
        <taxon>Nitrosomonadales</taxon>
        <taxon>Nitrosomonadaceae</taxon>
        <taxon>Nitrosomonas</taxon>
    </lineage>
</organism>
<accession>Q0AEE4</accession>
<feature type="chain" id="PRO_1000000414" description="Argininosuccinate synthase">
    <location>
        <begin position="1"/>
        <end position="404"/>
    </location>
</feature>
<feature type="binding site" evidence="1">
    <location>
        <begin position="10"/>
        <end position="18"/>
    </location>
    <ligand>
        <name>ATP</name>
        <dbReference type="ChEBI" id="CHEBI:30616"/>
    </ligand>
</feature>
<feature type="binding site" evidence="1">
    <location>
        <position position="37"/>
    </location>
    <ligand>
        <name>ATP</name>
        <dbReference type="ChEBI" id="CHEBI:30616"/>
    </ligand>
</feature>
<feature type="binding site" evidence="1">
    <location>
        <position position="88"/>
    </location>
    <ligand>
        <name>L-citrulline</name>
        <dbReference type="ChEBI" id="CHEBI:57743"/>
    </ligand>
</feature>
<feature type="binding site" evidence="1">
    <location>
        <position position="93"/>
    </location>
    <ligand>
        <name>L-citrulline</name>
        <dbReference type="ChEBI" id="CHEBI:57743"/>
    </ligand>
</feature>
<feature type="binding site" evidence="1">
    <location>
        <position position="118"/>
    </location>
    <ligand>
        <name>ATP</name>
        <dbReference type="ChEBI" id="CHEBI:30616"/>
    </ligand>
</feature>
<feature type="binding site" evidence="1">
    <location>
        <position position="120"/>
    </location>
    <ligand>
        <name>L-aspartate</name>
        <dbReference type="ChEBI" id="CHEBI:29991"/>
    </ligand>
</feature>
<feature type="binding site" evidence="1">
    <location>
        <position position="124"/>
    </location>
    <ligand>
        <name>L-aspartate</name>
        <dbReference type="ChEBI" id="CHEBI:29991"/>
    </ligand>
</feature>
<feature type="binding site" evidence="1">
    <location>
        <position position="124"/>
    </location>
    <ligand>
        <name>L-citrulline</name>
        <dbReference type="ChEBI" id="CHEBI:57743"/>
    </ligand>
</feature>
<feature type="binding site" evidence="1">
    <location>
        <position position="125"/>
    </location>
    <ligand>
        <name>L-aspartate</name>
        <dbReference type="ChEBI" id="CHEBI:29991"/>
    </ligand>
</feature>
<feature type="binding site" evidence="1">
    <location>
        <position position="128"/>
    </location>
    <ligand>
        <name>L-citrulline</name>
        <dbReference type="ChEBI" id="CHEBI:57743"/>
    </ligand>
</feature>
<feature type="binding site" evidence="1">
    <location>
        <position position="179"/>
    </location>
    <ligand>
        <name>L-citrulline</name>
        <dbReference type="ChEBI" id="CHEBI:57743"/>
    </ligand>
</feature>
<feature type="binding site" evidence="1">
    <location>
        <position position="188"/>
    </location>
    <ligand>
        <name>L-citrulline</name>
        <dbReference type="ChEBI" id="CHEBI:57743"/>
    </ligand>
</feature>
<feature type="binding site" evidence="1">
    <location>
        <position position="264"/>
    </location>
    <ligand>
        <name>L-citrulline</name>
        <dbReference type="ChEBI" id="CHEBI:57743"/>
    </ligand>
</feature>
<feature type="binding site" evidence="1">
    <location>
        <position position="276"/>
    </location>
    <ligand>
        <name>L-citrulline</name>
        <dbReference type="ChEBI" id="CHEBI:57743"/>
    </ligand>
</feature>
<gene>
    <name evidence="1" type="primary">argG</name>
    <name type="ordered locus">Neut_2065</name>
</gene>
<reference key="1">
    <citation type="journal article" date="2007" name="Environ. Microbiol.">
        <title>Whole-genome analysis of the ammonia-oxidizing bacterium, Nitrosomonas eutropha C91: implications for niche adaptation.</title>
        <authorList>
            <person name="Stein L.Y."/>
            <person name="Arp D.J."/>
            <person name="Berube P.M."/>
            <person name="Chain P.S."/>
            <person name="Hauser L."/>
            <person name="Jetten M.S."/>
            <person name="Klotz M.G."/>
            <person name="Larimer F.W."/>
            <person name="Norton J.M."/>
            <person name="Op den Camp H.J.M."/>
            <person name="Shin M."/>
            <person name="Wei X."/>
        </authorList>
    </citation>
    <scope>NUCLEOTIDE SEQUENCE [LARGE SCALE GENOMIC DNA]</scope>
    <source>
        <strain>DSM 101675 / C91 / Nm57</strain>
    </source>
</reference>
<protein>
    <recommendedName>
        <fullName evidence="1">Argininosuccinate synthase</fullName>
        <ecNumber evidence="1">6.3.4.5</ecNumber>
    </recommendedName>
    <alternativeName>
        <fullName evidence="1">Citrulline--aspartate ligase</fullName>
    </alternativeName>
</protein>
<dbReference type="EC" id="6.3.4.5" evidence="1"/>
<dbReference type="EMBL" id="CP000450">
    <property type="protein sequence ID" value="ABI60288.1"/>
    <property type="molecule type" value="Genomic_DNA"/>
</dbReference>
<dbReference type="RefSeq" id="WP_011635085.1">
    <property type="nucleotide sequence ID" value="NC_008344.1"/>
</dbReference>
<dbReference type="SMR" id="Q0AEE4"/>
<dbReference type="STRING" id="335283.Neut_2065"/>
<dbReference type="KEGG" id="net:Neut_2065"/>
<dbReference type="eggNOG" id="COG0137">
    <property type="taxonomic scope" value="Bacteria"/>
</dbReference>
<dbReference type="HOGENOM" id="CLU_032784_4_2_4"/>
<dbReference type="OrthoDB" id="9801641at2"/>
<dbReference type="UniPathway" id="UPA00068">
    <property type="reaction ID" value="UER00113"/>
</dbReference>
<dbReference type="Proteomes" id="UP000001966">
    <property type="component" value="Chromosome"/>
</dbReference>
<dbReference type="GO" id="GO:0005737">
    <property type="term" value="C:cytoplasm"/>
    <property type="evidence" value="ECO:0007669"/>
    <property type="project" value="UniProtKB-SubCell"/>
</dbReference>
<dbReference type="GO" id="GO:0004055">
    <property type="term" value="F:argininosuccinate synthase activity"/>
    <property type="evidence" value="ECO:0007669"/>
    <property type="project" value="UniProtKB-UniRule"/>
</dbReference>
<dbReference type="GO" id="GO:0005524">
    <property type="term" value="F:ATP binding"/>
    <property type="evidence" value="ECO:0007669"/>
    <property type="project" value="UniProtKB-UniRule"/>
</dbReference>
<dbReference type="GO" id="GO:0000053">
    <property type="term" value="P:argininosuccinate metabolic process"/>
    <property type="evidence" value="ECO:0007669"/>
    <property type="project" value="TreeGrafter"/>
</dbReference>
<dbReference type="GO" id="GO:0006526">
    <property type="term" value="P:L-arginine biosynthetic process"/>
    <property type="evidence" value="ECO:0007669"/>
    <property type="project" value="UniProtKB-UniRule"/>
</dbReference>
<dbReference type="GO" id="GO:0000050">
    <property type="term" value="P:urea cycle"/>
    <property type="evidence" value="ECO:0007669"/>
    <property type="project" value="TreeGrafter"/>
</dbReference>
<dbReference type="CDD" id="cd01999">
    <property type="entry name" value="ASS"/>
    <property type="match status" value="1"/>
</dbReference>
<dbReference type="FunFam" id="3.40.50.620:FF:000019">
    <property type="entry name" value="Argininosuccinate synthase"/>
    <property type="match status" value="1"/>
</dbReference>
<dbReference type="FunFam" id="3.90.1260.10:FF:000007">
    <property type="entry name" value="Argininosuccinate synthase"/>
    <property type="match status" value="1"/>
</dbReference>
<dbReference type="Gene3D" id="3.90.1260.10">
    <property type="entry name" value="Argininosuccinate synthetase, chain A, domain 2"/>
    <property type="match status" value="1"/>
</dbReference>
<dbReference type="Gene3D" id="3.40.50.620">
    <property type="entry name" value="HUPs"/>
    <property type="match status" value="1"/>
</dbReference>
<dbReference type="Gene3D" id="1.20.5.470">
    <property type="entry name" value="Single helix bin"/>
    <property type="match status" value="1"/>
</dbReference>
<dbReference type="HAMAP" id="MF_00005">
    <property type="entry name" value="Arg_succ_synth_type1"/>
    <property type="match status" value="1"/>
</dbReference>
<dbReference type="InterPro" id="IPR048268">
    <property type="entry name" value="Arginosuc_syn_C"/>
</dbReference>
<dbReference type="InterPro" id="IPR048267">
    <property type="entry name" value="Arginosuc_syn_N"/>
</dbReference>
<dbReference type="InterPro" id="IPR001518">
    <property type="entry name" value="Arginosuc_synth"/>
</dbReference>
<dbReference type="InterPro" id="IPR018223">
    <property type="entry name" value="Arginosuc_synth_CS"/>
</dbReference>
<dbReference type="InterPro" id="IPR023434">
    <property type="entry name" value="Arginosuc_synth_type_1_subfam"/>
</dbReference>
<dbReference type="InterPro" id="IPR024074">
    <property type="entry name" value="AS_cat/multimer_dom_body"/>
</dbReference>
<dbReference type="InterPro" id="IPR014729">
    <property type="entry name" value="Rossmann-like_a/b/a_fold"/>
</dbReference>
<dbReference type="NCBIfam" id="TIGR00032">
    <property type="entry name" value="argG"/>
    <property type="match status" value="1"/>
</dbReference>
<dbReference type="NCBIfam" id="NF001770">
    <property type="entry name" value="PRK00509.1"/>
    <property type="match status" value="1"/>
</dbReference>
<dbReference type="PANTHER" id="PTHR11587">
    <property type="entry name" value="ARGININOSUCCINATE SYNTHASE"/>
    <property type="match status" value="1"/>
</dbReference>
<dbReference type="PANTHER" id="PTHR11587:SF2">
    <property type="entry name" value="ARGININOSUCCINATE SYNTHASE"/>
    <property type="match status" value="1"/>
</dbReference>
<dbReference type="Pfam" id="PF20979">
    <property type="entry name" value="Arginosuc_syn_C"/>
    <property type="match status" value="1"/>
</dbReference>
<dbReference type="Pfam" id="PF00764">
    <property type="entry name" value="Arginosuc_synth"/>
    <property type="match status" value="1"/>
</dbReference>
<dbReference type="SUPFAM" id="SSF52402">
    <property type="entry name" value="Adenine nucleotide alpha hydrolases-like"/>
    <property type="match status" value="1"/>
</dbReference>
<dbReference type="SUPFAM" id="SSF69864">
    <property type="entry name" value="Argininosuccinate synthetase, C-terminal domain"/>
    <property type="match status" value="1"/>
</dbReference>
<dbReference type="PROSITE" id="PS00564">
    <property type="entry name" value="ARGININOSUCCIN_SYN_1"/>
    <property type="match status" value="1"/>
</dbReference>
<dbReference type="PROSITE" id="PS00565">
    <property type="entry name" value="ARGININOSUCCIN_SYN_2"/>
    <property type="match status" value="1"/>
</dbReference>
<name>ASSY_NITEC</name>
<proteinExistence type="inferred from homology"/>
<evidence type="ECO:0000255" key="1">
    <source>
        <dbReference type="HAMAP-Rule" id="MF_00005"/>
    </source>
</evidence>
<comment type="catalytic activity">
    <reaction evidence="1">
        <text>L-citrulline + L-aspartate + ATP = 2-(N(omega)-L-arginino)succinate + AMP + diphosphate + H(+)</text>
        <dbReference type="Rhea" id="RHEA:10932"/>
        <dbReference type="ChEBI" id="CHEBI:15378"/>
        <dbReference type="ChEBI" id="CHEBI:29991"/>
        <dbReference type="ChEBI" id="CHEBI:30616"/>
        <dbReference type="ChEBI" id="CHEBI:33019"/>
        <dbReference type="ChEBI" id="CHEBI:57472"/>
        <dbReference type="ChEBI" id="CHEBI:57743"/>
        <dbReference type="ChEBI" id="CHEBI:456215"/>
        <dbReference type="EC" id="6.3.4.5"/>
    </reaction>
</comment>
<comment type="pathway">
    <text evidence="1">Amino-acid biosynthesis; L-arginine biosynthesis; L-arginine from L-ornithine and carbamoyl phosphate: step 2/3.</text>
</comment>
<comment type="subunit">
    <text evidence="1">Homotetramer.</text>
</comment>
<comment type="subcellular location">
    <subcellularLocation>
        <location evidence="1">Cytoplasm</location>
    </subcellularLocation>
</comment>
<comment type="similarity">
    <text evidence="1">Belongs to the argininosuccinate synthase family. Type 1 subfamily.</text>
</comment>
<keyword id="KW-0028">Amino-acid biosynthesis</keyword>
<keyword id="KW-0055">Arginine biosynthesis</keyword>
<keyword id="KW-0067">ATP-binding</keyword>
<keyword id="KW-0963">Cytoplasm</keyword>
<keyword id="KW-0436">Ligase</keyword>
<keyword id="KW-0547">Nucleotide-binding</keyword>
<sequence>MDKVKKAVLAFSGGLDTSVILKWLQDTYQCEVVTFTADIGQGEEIEPARAKALQFGIKEIFIEDLREEFVRDYVFPMFRANTVYEGEYLLGTSIARPLIAKRQVEIAQQTGADAVSHGATGKGNDQVRFELGYYALQPDIRVIAPWREWDLTSREKLLAYAEKQGIPIEMKKKQGSPYSMDANLLHISYEGRALEDPAVEAEESMWRWTISPEAAPNEPEYLDLEYERGDIVALNGEKLSPAAVLTKLNQLGGKHGIGRLDLVENRYVGMKSRGCYETPGGTIMLRAHRAIESITLDREVAHLKDDLMPRYAALIYNGYWWSPERKLLQVLIDESQAHVNGQVRVKLYKGNVMVVGRDSRTDSLFDPTIATFEEDGGAYHQADAAGFIKLNALRMRIAKALRRH</sequence>